<name>PDXY_ECOLI</name>
<organism>
    <name type="scientific">Escherichia coli (strain K12)</name>
    <dbReference type="NCBI Taxonomy" id="83333"/>
    <lineage>
        <taxon>Bacteria</taxon>
        <taxon>Pseudomonadati</taxon>
        <taxon>Pseudomonadota</taxon>
        <taxon>Gammaproteobacteria</taxon>
        <taxon>Enterobacterales</taxon>
        <taxon>Enterobacteriaceae</taxon>
        <taxon>Escherichia</taxon>
    </lineage>
</organism>
<accession>P77150</accession>
<reference key="1">
    <citation type="journal article" date="1996" name="DNA Res.">
        <title>A 570-kb DNA sequence of the Escherichia coli K-12 genome corresponding to the 28.0-40.1 min region on the linkage map.</title>
        <authorList>
            <person name="Aiba H."/>
            <person name="Baba T."/>
            <person name="Fujita K."/>
            <person name="Hayashi K."/>
            <person name="Inada T."/>
            <person name="Isono K."/>
            <person name="Itoh T."/>
            <person name="Kasai H."/>
            <person name="Kashimoto K."/>
            <person name="Kimura S."/>
            <person name="Kitakawa M."/>
            <person name="Kitagawa M."/>
            <person name="Makino K."/>
            <person name="Miki T."/>
            <person name="Mizobuchi K."/>
            <person name="Mori H."/>
            <person name="Mori T."/>
            <person name="Motomura K."/>
            <person name="Nakade S."/>
            <person name="Nakamura Y."/>
            <person name="Nashimoto H."/>
            <person name="Nishio Y."/>
            <person name="Oshima T."/>
            <person name="Saito N."/>
            <person name="Sampei G."/>
            <person name="Seki Y."/>
            <person name="Sivasundaram S."/>
            <person name="Tagami H."/>
            <person name="Takeda J."/>
            <person name="Takemoto K."/>
            <person name="Takeuchi Y."/>
            <person name="Wada C."/>
            <person name="Yamamoto Y."/>
            <person name="Horiuchi T."/>
        </authorList>
    </citation>
    <scope>NUCLEOTIDE SEQUENCE [LARGE SCALE GENOMIC DNA]</scope>
    <source>
        <strain>K12 / W3110 / ATCC 27325 / DSM 5911</strain>
    </source>
</reference>
<reference key="2">
    <citation type="journal article" date="1997" name="Science">
        <title>The complete genome sequence of Escherichia coli K-12.</title>
        <authorList>
            <person name="Blattner F.R."/>
            <person name="Plunkett G. III"/>
            <person name="Bloch C.A."/>
            <person name="Perna N.T."/>
            <person name="Burland V."/>
            <person name="Riley M."/>
            <person name="Collado-Vides J."/>
            <person name="Glasner J.D."/>
            <person name="Rode C.K."/>
            <person name="Mayhew G.F."/>
            <person name="Gregor J."/>
            <person name="Davis N.W."/>
            <person name="Kirkpatrick H.A."/>
            <person name="Goeden M.A."/>
            <person name="Rose D.J."/>
            <person name="Mau B."/>
            <person name="Shao Y."/>
        </authorList>
    </citation>
    <scope>NUCLEOTIDE SEQUENCE [LARGE SCALE GENOMIC DNA]</scope>
    <source>
        <strain>K12 / MG1655 / ATCC 47076</strain>
    </source>
</reference>
<reference key="3">
    <citation type="journal article" date="2006" name="Mol. Syst. Biol.">
        <title>Highly accurate genome sequences of Escherichia coli K-12 strains MG1655 and W3110.</title>
        <authorList>
            <person name="Hayashi K."/>
            <person name="Morooka N."/>
            <person name="Yamamoto Y."/>
            <person name="Fujita K."/>
            <person name="Isono K."/>
            <person name="Choi S."/>
            <person name="Ohtsubo E."/>
            <person name="Baba T."/>
            <person name="Wanner B.L."/>
            <person name="Mori H."/>
            <person name="Horiuchi T."/>
        </authorList>
    </citation>
    <scope>NUCLEOTIDE SEQUENCE [LARGE SCALE GENOMIC DNA]</scope>
    <source>
        <strain>K12 / W3110 / ATCC 27325 / DSM 5911</strain>
    </source>
</reference>
<reference key="4">
    <citation type="journal article" date="1998" name="J. Bacteriol.">
        <title>Identification and function of the pdxY gene, which encodes a novel pyridoxal kinase involved in the salvage pathway of pyridoxal 5'-phosphate biosynthesis in Escherichia coli K-12.</title>
        <authorList>
            <person name="Yang Y."/>
            <person name="Tsui H.C."/>
            <person name="Man T.K."/>
            <person name="Winkler M.E."/>
        </authorList>
    </citation>
    <scope>FUNCTION</scope>
    <scope>CATALYTIC ACTIVITY</scope>
    <scope>DISRUPTION PHENOTYPE</scope>
    <scope>PATHWAY</scope>
    <source>
        <strain>K12</strain>
    </source>
</reference>
<reference key="5">
    <citation type="journal article" date="2004" name="Protein Expr. Purif.">
        <title>Expression, purification, and kinetic constants for human and Escherichia coli pyridoxal kinases.</title>
        <authorList>
            <person name="di Salvo M.L."/>
            <person name="Hunt S."/>
            <person name="Schirch V."/>
        </authorList>
    </citation>
    <scope>FUNCTION</scope>
    <scope>CATALYTIC ACTIVITY</scope>
</reference>
<reference key="6">
    <citation type="journal article" date="2004" name="J. Bacteriol.">
        <title>Crystal structure of the PdxY protein from Escherichia coli.</title>
        <authorList>
            <person name="Safo M.K."/>
            <person name="Musayev F.N."/>
            <person name="Hunt S."/>
            <person name="di Salvo M.L."/>
            <person name="Scarsdale N."/>
            <person name="Schirch V."/>
        </authorList>
    </citation>
    <scope>X-RAY CRYSTALLOGRAPHY (2.22 ANGSTROMS) IN COMPLEX WITH PYRIDOXAL</scope>
    <scope>SUBUNIT</scope>
</reference>
<reference key="7">
    <citation type="journal article" date="2005" name="Proteins">
        <title>Structural analysis of a set of proteins resulting from a bacterial genomics project.</title>
        <authorList>
            <person name="Badger J."/>
            <person name="Sauder J.M."/>
            <person name="Adams J.M."/>
            <person name="Antonysamy S."/>
            <person name="Bain K."/>
            <person name="Bergseid M.G."/>
            <person name="Buchanan S.G."/>
            <person name="Buchanan M.D."/>
            <person name="Batiyenko Y."/>
            <person name="Christopher J.A."/>
            <person name="Emtage S."/>
            <person name="Eroshkina A."/>
            <person name="Feil I."/>
            <person name="Furlong E.B."/>
            <person name="Gajiwala K.S."/>
            <person name="Gao X."/>
            <person name="He D."/>
            <person name="Hendle J."/>
            <person name="Huber A."/>
            <person name="Hoda K."/>
            <person name="Kearins P."/>
            <person name="Kissinger C."/>
            <person name="Laubert B."/>
            <person name="Lewis H.A."/>
            <person name="Lin J."/>
            <person name="Loomis K."/>
            <person name="Lorimer D."/>
            <person name="Louie G."/>
            <person name="Maletic M."/>
            <person name="Marsh C.D."/>
            <person name="Miller I."/>
            <person name="Molinari J."/>
            <person name="Muller-Dieckmann H.J."/>
            <person name="Newman J.M."/>
            <person name="Noland B.W."/>
            <person name="Pagarigan B."/>
            <person name="Park F."/>
            <person name="Peat T.S."/>
            <person name="Post K.W."/>
            <person name="Radojicic S."/>
            <person name="Ramos A."/>
            <person name="Romero R."/>
            <person name="Rutter M.E."/>
            <person name="Sanderson W.E."/>
            <person name="Schwinn K.D."/>
            <person name="Tresser J."/>
            <person name="Winhoven J."/>
            <person name="Wright T.A."/>
            <person name="Wu L."/>
            <person name="Xu J."/>
            <person name="Harris T.J.R."/>
        </authorList>
    </citation>
    <scope>X-RAY CRYSTALLOGRAPHY (1.96 ANGSTROMS) OF 2-287</scope>
</reference>
<feature type="chain" id="PRO_0000213345" description="Pyridoxal kinase PdxY">
    <location>
        <begin position="1"/>
        <end position="287"/>
    </location>
</feature>
<feature type="binding site" evidence="4">
    <location>
        <position position="10"/>
    </location>
    <ligand>
        <name>substrate</name>
    </ligand>
</feature>
<feature type="binding site" evidence="4">
    <location>
        <begin position="45"/>
        <end position="46"/>
    </location>
    <ligand>
        <name>substrate</name>
    </ligand>
</feature>
<feature type="binding site" evidence="1">
    <location>
        <position position="112"/>
    </location>
    <ligand>
        <name>ATP</name>
        <dbReference type="ChEBI" id="CHEBI:30616"/>
    </ligand>
</feature>
<feature type="binding site" evidence="1">
    <location>
        <position position="144"/>
    </location>
    <ligand>
        <name>ATP</name>
        <dbReference type="ChEBI" id="CHEBI:30616"/>
    </ligand>
</feature>
<feature type="binding site" evidence="1">
    <location>
        <position position="149"/>
    </location>
    <ligand>
        <name>ATP</name>
        <dbReference type="ChEBI" id="CHEBI:30616"/>
    </ligand>
</feature>
<feature type="binding site" evidence="1">
    <location>
        <position position="182"/>
    </location>
    <ligand>
        <name>ATP</name>
        <dbReference type="ChEBI" id="CHEBI:30616"/>
    </ligand>
</feature>
<feature type="binding site" evidence="1">
    <location>
        <begin position="209"/>
        <end position="212"/>
    </location>
    <ligand>
        <name>ATP</name>
        <dbReference type="ChEBI" id="CHEBI:30616"/>
    </ligand>
</feature>
<feature type="binding site" evidence="4">
    <location>
        <position position="224"/>
    </location>
    <ligand>
        <name>substrate</name>
    </ligand>
</feature>
<feature type="strand" evidence="9">
    <location>
        <begin position="4"/>
        <end position="9"/>
    </location>
</feature>
<feature type="strand" evidence="9">
    <location>
        <begin position="12"/>
        <end position="15"/>
    </location>
</feature>
<feature type="helix" evidence="9">
    <location>
        <begin position="19"/>
        <end position="28"/>
    </location>
</feature>
<feature type="strand" evidence="9">
    <location>
        <begin position="32"/>
        <end position="43"/>
    </location>
</feature>
<feature type="helix" evidence="9">
    <location>
        <begin position="45"/>
        <end position="47"/>
    </location>
</feature>
<feature type="strand" evidence="9">
    <location>
        <begin position="52"/>
        <end position="54"/>
    </location>
</feature>
<feature type="helix" evidence="9">
    <location>
        <begin position="57"/>
        <end position="69"/>
    </location>
</feature>
<feature type="helix" evidence="9">
    <location>
        <begin position="73"/>
        <end position="75"/>
    </location>
</feature>
<feature type="strand" evidence="9">
    <location>
        <begin position="78"/>
        <end position="81"/>
    </location>
</feature>
<feature type="helix" evidence="9">
    <location>
        <begin position="87"/>
        <end position="103"/>
    </location>
</feature>
<feature type="strand" evidence="9">
    <location>
        <begin position="108"/>
        <end position="111"/>
    </location>
</feature>
<feature type="turn" evidence="9">
    <location>
        <begin position="118"/>
        <end position="120"/>
    </location>
</feature>
<feature type="helix" evidence="9">
    <location>
        <begin position="128"/>
        <end position="134"/>
    </location>
</feature>
<feature type="helix" evidence="9">
    <location>
        <begin position="136"/>
        <end position="139"/>
    </location>
</feature>
<feature type="strand" evidence="9">
    <location>
        <begin position="141"/>
        <end position="143"/>
    </location>
</feature>
<feature type="helix" evidence="9">
    <location>
        <begin position="147"/>
        <end position="154"/>
    </location>
</feature>
<feature type="helix" evidence="9">
    <location>
        <begin position="161"/>
        <end position="173"/>
    </location>
</feature>
<feature type="strand" evidence="9">
    <location>
        <begin position="177"/>
        <end position="181"/>
    </location>
</feature>
<feature type="helix" evidence="9">
    <location>
        <begin position="185"/>
        <end position="187"/>
    </location>
</feature>
<feature type="strand" evidence="9">
    <location>
        <begin position="188"/>
        <end position="190"/>
    </location>
</feature>
<feature type="strand" evidence="9">
    <location>
        <begin position="193"/>
        <end position="199"/>
    </location>
</feature>
<feature type="strand" evidence="9">
    <location>
        <begin position="204"/>
        <end position="210"/>
    </location>
</feature>
<feature type="helix" evidence="9">
    <location>
        <begin position="222"/>
        <end position="235"/>
    </location>
</feature>
<feature type="helix" evidence="9">
    <location>
        <begin position="240"/>
        <end position="260"/>
    </location>
</feature>
<feature type="turn" evidence="9">
    <location>
        <begin position="268"/>
        <end position="272"/>
    </location>
</feature>
<feature type="helix" evidence="9">
    <location>
        <begin position="273"/>
        <end position="276"/>
    </location>
</feature>
<protein>
    <recommendedName>
        <fullName evidence="7">Pyridoxal kinase PdxY</fullName>
        <shortName evidence="7">PL kinase</shortName>
        <ecNumber evidence="3 5">2.7.1.35</ecNumber>
    </recommendedName>
    <alternativeName>
        <fullName evidence="6">Pyridoxal kinase 2</fullName>
        <shortName evidence="6">PL kinase 2</shortName>
    </alternativeName>
</protein>
<evidence type="ECO:0000250" key="1">
    <source>
        <dbReference type="UniProtKB" id="P40191"/>
    </source>
</evidence>
<evidence type="ECO:0000255" key="2">
    <source>
        <dbReference type="HAMAP-Rule" id="MF_01639"/>
    </source>
</evidence>
<evidence type="ECO:0000269" key="3">
    <source>
    </source>
</evidence>
<evidence type="ECO:0000269" key="4">
    <source>
    </source>
</evidence>
<evidence type="ECO:0000269" key="5">
    <source>
    </source>
</evidence>
<evidence type="ECO:0000303" key="6">
    <source>
    </source>
</evidence>
<evidence type="ECO:0000303" key="7">
    <source>
    </source>
</evidence>
<evidence type="ECO:0000305" key="8"/>
<evidence type="ECO:0007829" key="9">
    <source>
        <dbReference type="PDB" id="1VI9"/>
    </source>
</evidence>
<comment type="function">
    <text evidence="3 5">Pyridoxal kinase involved in the salvage pathway of pyridoxal 5'-phosphate (PLP). Catalyzes the phosphorylation of pyridoxal to PLP in vivo, but shows very low activity compared to PdxK. Displays a low level of pyridoxine kinase activity when overexpressed, which is however not physiologically relevant.</text>
</comment>
<comment type="catalytic activity">
    <reaction evidence="3 5">
        <text>pyridoxal + ATP = pyridoxal 5'-phosphate + ADP + H(+)</text>
        <dbReference type="Rhea" id="RHEA:10224"/>
        <dbReference type="ChEBI" id="CHEBI:15378"/>
        <dbReference type="ChEBI" id="CHEBI:17310"/>
        <dbReference type="ChEBI" id="CHEBI:30616"/>
        <dbReference type="ChEBI" id="CHEBI:456216"/>
        <dbReference type="ChEBI" id="CHEBI:597326"/>
        <dbReference type="EC" id="2.7.1.35"/>
    </reaction>
</comment>
<comment type="cofactor">
    <cofactor evidence="2">
        <name>Mg(2+)</name>
        <dbReference type="ChEBI" id="CHEBI:18420"/>
    </cofactor>
</comment>
<comment type="pathway">
    <text evidence="5">Cofactor metabolism; pyridoxal 5'-phosphate salvage; pyridoxal 5'-phosphate from pyridoxal: step 1/1.</text>
</comment>
<comment type="subunit">
    <text evidence="4">Homodimer.</text>
</comment>
<comment type="disruption phenotype">
    <text evidence="5">Cells lacking this gene and cells lacking both pdxY and pdxK are not auxotrophs, meaning that the de novo pathway of PLP biosynthesis is functional. For PLP salvage, the pdxY single mutant can use both pyridoxine and pyridoxal, the pdxK single mutant can use pyridoxal but not pyridoxine, and the double mutant can no longer use both compounds.</text>
</comment>
<comment type="similarity">
    <text evidence="8">Belongs to the pyridoxine kinase family. PdxY subfamily.</text>
</comment>
<proteinExistence type="evidence at protein level"/>
<dbReference type="EC" id="2.7.1.35" evidence="3 5"/>
<dbReference type="EMBL" id="U00096">
    <property type="protein sequence ID" value="AAC74708.1"/>
    <property type="molecule type" value="Genomic_DNA"/>
</dbReference>
<dbReference type="EMBL" id="AP009048">
    <property type="protein sequence ID" value="BAA15397.1"/>
    <property type="molecule type" value="Genomic_DNA"/>
</dbReference>
<dbReference type="PIR" id="F64920">
    <property type="entry name" value="F64920"/>
</dbReference>
<dbReference type="RefSeq" id="NP_416153.1">
    <property type="nucleotide sequence ID" value="NC_000913.3"/>
</dbReference>
<dbReference type="RefSeq" id="WP_001307229.1">
    <property type="nucleotide sequence ID" value="NZ_STEB01000003.1"/>
</dbReference>
<dbReference type="PDB" id="1TD2">
    <property type="method" value="X-ray"/>
    <property type="resolution" value="2.22 A"/>
    <property type="chains" value="A/B=1-287"/>
</dbReference>
<dbReference type="PDB" id="1VI9">
    <property type="method" value="X-ray"/>
    <property type="resolution" value="1.96 A"/>
    <property type="chains" value="A/B/C/D=2-287"/>
</dbReference>
<dbReference type="PDBsum" id="1TD2"/>
<dbReference type="PDBsum" id="1VI9"/>
<dbReference type="SMR" id="P77150"/>
<dbReference type="BioGRID" id="4263486">
    <property type="interactions" value="9"/>
</dbReference>
<dbReference type="FunCoup" id="P77150">
    <property type="interactions" value="655"/>
</dbReference>
<dbReference type="IntAct" id="P77150">
    <property type="interactions" value="2"/>
</dbReference>
<dbReference type="STRING" id="511145.b1636"/>
<dbReference type="DrugBank" id="DB02153">
    <property type="generic name" value="3-sulfino-L-alanine"/>
</dbReference>
<dbReference type="jPOST" id="P77150"/>
<dbReference type="PaxDb" id="511145-b1636"/>
<dbReference type="EnsemblBacteria" id="AAC74708">
    <property type="protein sequence ID" value="AAC74708"/>
    <property type="gene ID" value="b1636"/>
</dbReference>
<dbReference type="GeneID" id="75204481"/>
<dbReference type="GeneID" id="946162"/>
<dbReference type="KEGG" id="ecj:JW1628"/>
<dbReference type="KEGG" id="eco:b1636"/>
<dbReference type="PATRIC" id="fig|511145.12.peg.1707"/>
<dbReference type="EchoBASE" id="EB3699"/>
<dbReference type="eggNOG" id="COG2240">
    <property type="taxonomic scope" value="Bacteria"/>
</dbReference>
<dbReference type="HOGENOM" id="CLU_046496_3_0_6"/>
<dbReference type="InParanoid" id="P77150"/>
<dbReference type="OMA" id="HTQYGQW"/>
<dbReference type="PhylomeDB" id="P77150"/>
<dbReference type="BioCyc" id="EcoCyc:PDXY-MONOMER"/>
<dbReference type="BioCyc" id="MetaCyc:PDXY-MONOMER"/>
<dbReference type="BRENDA" id="2.7.1.35">
    <property type="organism ID" value="2026"/>
</dbReference>
<dbReference type="UniPathway" id="UPA01068">
    <property type="reaction ID" value="UER00298"/>
</dbReference>
<dbReference type="EvolutionaryTrace" id="P77150"/>
<dbReference type="PRO" id="PR:P77150"/>
<dbReference type="Proteomes" id="UP000000625">
    <property type="component" value="Chromosome"/>
</dbReference>
<dbReference type="GO" id="GO:0005829">
    <property type="term" value="C:cytosol"/>
    <property type="evidence" value="ECO:0000314"/>
    <property type="project" value="EcoCyc"/>
</dbReference>
<dbReference type="GO" id="GO:0005524">
    <property type="term" value="F:ATP binding"/>
    <property type="evidence" value="ECO:0007669"/>
    <property type="project" value="UniProtKB-UniRule"/>
</dbReference>
<dbReference type="GO" id="GO:0000287">
    <property type="term" value="F:magnesium ion binding"/>
    <property type="evidence" value="ECO:0007669"/>
    <property type="project" value="UniProtKB-UniRule"/>
</dbReference>
<dbReference type="GO" id="GO:0042803">
    <property type="term" value="F:protein homodimerization activity"/>
    <property type="evidence" value="ECO:0000314"/>
    <property type="project" value="EcoCyc"/>
</dbReference>
<dbReference type="GO" id="GO:0008478">
    <property type="term" value="F:pyridoxal kinase activity"/>
    <property type="evidence" value="ECO:0000314"/>
    <property type="project" value="EcoCyc"/>
</dbReference>
<dbReference type="GO" id="GO:0009443">
    <property type="term" value="P:pyridoxal 5'-phosphate salvage"/>
    <property type="evidence" value="ECO:0000315"/>
    <property type="project" value="EcoCyc"/>
</dbReference>
<dbReference type="GO" id="GO:0042817">
    <property type="term" value="P:pyridoxal metabolic process"/>
    <property type="evidence" value="ECO:0000315"/>
    <property type="project" value="EcoliWiki"/>
</dbReference>
<dbReference type="GO" id="GO:0042819">
    <property type="term" value="P:vitamin B6 biosynthetic process"/>
    <property type="evidence" value="ECO:0000315"/>
    <property type="project" value="EcoliWiki"/>
</dbReference>
<dbReference type="CDD" id="cd01173">
    <property type="entry name" value="pyridoxal_pyridoxamine_kinase"/>
    <property type="match status" value="1"/>
</dbReference>
<dbReference type="FunFam" id="3.40.1190.20:FF:000008">
    <property type="entry name" value="Pyridoxal kinase PdxY"/>
    <property type="match status" value="1"/>
</dbReference>
<dbReference type="Gene3D" id="3.40.1190.20">
    <property type="match status" value="1"/>
</dbReference>
<dbReference type="HAMAP" id="MF_01639">
    <property type="entry name" value="PdxY"/>
    <property type="match status" value="1"/>
</dbReference>
<dbReference type="InterPro" id="IPR013749">
    <property type="entry name" value="PM/HMP-P_kinase-1"/>
</dbReference>
<dbReference type="InterPro" id="IPR004625">
    <property type="entry name" value="PyrdxlKinase"/>
</dbReference>
<dbReference type="InterPro" id="IPR023685">
    <property type="entry name" value="Pyridoxal_kinase_PdxY"/>
</dbReference>
<dbReference type="InterPro" id="IPR029056">
    <property type="entry name" value="Ribokinase-like"/>
</dbReference>
<dbReference type="NCBIfam" id="NF004398">
    <property type="entry name" value="PRK05756.1"/>
    <property type="match status" value="1"/>
</dbReference>
<dbReference type="NCBIfam" id="TIGR00687">
    <property type="entry name" value="pyridox_kin"/>
    <property type="match status" value="1"/>
</dbReference>
<dbReference type="PANTHER" id="PTHR10534">
    <property type="entry name" value="PYRIDOXAL KINASE"/>
    <property type="match status" value="1"/>
</dbReference>
<dbReference type="PANTHER" id="PTHR10534:SF2">
    <property type="entry name" value="PYRIDOXAL KINASE"/>
    <property type="match status" value="1"/>
</dbReference>
<dbReference type="Pfam" id="PF08543">
    <property type="entry name" value="Phos_pyr_kin"/>
    <property type="match status" value="1"/>
</dbReference>
<dbReference type="SUPFAM" id="SSF53613">
    <property type="entry name" value="Ribokinase-like"/>
    <property type="match status" value="1"/>
</dbReference>
<gene>
    <name evidence="7" type="primary">pdxY</name>
    <name type="synonym">ydgS</name>
    <name type="ordered locus">b1636</name>
    <name type="ordered locus">JW1628</name>
</gene>
<keyword id="KW-0002">3D-structure</keyword>
<keyword id="KW-0067">ATP-binding</keyword>
<keyword id="KW-0418">Kinase</keyword>
<keyword id="KW-0460">Magnesium</keyword>
<keyword id="KW-0547">Nucleotide-binding</keyword>
<keyword id="KW-1185">Reference proteome</keyword>
<keyword id="KW-0808">Transferase</keyword>
<sequence length="287" mass="31322">MMKNILAIQSHVVYGHAGNSAAEFPMRRLGANVWPLNTVQFSNHTQYGKWTGCVMPPSHLTEIVQGIAAIDKLHTCDAVLSGYLGSAEQGEHILGIVRQVKAANPQAKYFCDPVMGHPEKGCIVAPGVAEFHVRHGLPASDIIAPNLVELEILCEHAVNNVEEAVLAARELIAQGPQIVLVKHLARAGYSRDRFEMLLVTADEAWHISRPLVDFGMRQPVGVGDVTSGLLLVKLLQGATLQEALEHVTAAVYEIMVTTKAMQEYELQVVAAQDRIAKPEHYFSATKL</sequence>